<gene>
    <name evidence="1" type="primary">xseB</name>
    <name type="ordered locus">Tpet_1057</name>
</gene>
<feature type="chain" id="PRO_1000019597" description="Exodeoxyribonuclease 7 small subunit">
    <location>
        <begin position="1"/>
        <end position="75"/>
    </location>
</feature>
<reference key="1">
    <citation type="submission" date="2007-05" db="EMBL/GenBank/DDBJ databases">
        <title>Complete sequence of Thermotoga petrophila RKU-1.</title>
        <authorList>
            <consortium name="US DOE Joint Genome Institute"/>
            <person name="Copeland A."/>
            <person name="Lucas S."/>
            <person name="Lapidus A."/>
            <person name="Barry K."/>
            <person name="Glavina del Rio T."/>
            <person name="Dalin E."/>
            <person name="Tice H."/>
            <person name="Pitluck S."/>
            <person name="Sims D."/>
            <person name="Brettin T."/>
            <person name="Bruce D."/>
            <person name="Detter J.C."/>
            <person name="Han C."/>
            <person name="Tapia R."/>
            <person name="Schmutz J."/>
            <person name="Larimer F."/>
            <person name="Land M."/>
            <person name="Hauser L."/>
            <person name="Kyrpides N."/>
            <person name="Mikhailova N."/>
            <person name="Nelson K."/>
            <person name="Gogarten J.P."/>
            <person name="Noll K."/>
            <person name="Richardson P."/>
        </authorList>
    </citation>
    <scope>NUCLEOTIDE SEQUENCE [LARGE SCALE GENOMIC DNA]</scope>
    <source>
        <strain>ATCC BAA-488 / DSM 13995 / JCM 10881 / RKU-1</strain>
    </source>
</reference>
<name>EX7S_THEP1</name>
<accession>A5ILK1</accession>
<organism>
    <name type="scientific">Thermotoga petrophila (strain ATCC BAA-488 / DSM 13995 / JCM 10881 / RKU-1)</name>
    <dbReference type="NCBI Taxonomy" id="390874"/>
    <lineage>
        <taxon>Bacteria</taxon>
        <taxon>Thermotogati</taxon>
        <taxon>Thermotogota</taxon>
        <taxon>Thermotogae</taxon>
        <taxon>Thermotogales</taxon>
        <taxon>Thermotogaceae</taxon>
        <taxon>Thermotoga</taxon>
    </lineage>
</organism>
<keyword id="KW-0963">Cytoplasm</keyword>
<keyword id="KW-0269">Exonuclease</keyword>
<keyword id="KW-0378">Hydrolase</keyword>
<keyword id="KW-0540">Nuclease</keyword>
<dbReference type="EC" id="3.1.11.6" evidence="1"/>
<dbReference type="EMBL" id="CP000702">
    <property type="protein sequence ID" value="ABQ47074.1"/>
    <property type="molecule type" value="Genomic_DNA"/>
</dbReference>
<dbReference type="SMR" id="A5ILK1"/>
<dbReference type="STRING" id="390874.Tpet_1057"/>
<dbReference type="KEGG" id="tpt:Tpet_1057"/>
<dbReference type="eggNOG" id="COG1722">
    <property type="taxonomic scope" value="Bacteria"/>
</dbReference>
<dbReference type="HOGENOM" id="CLU_145918_3_4_0"/>
<dbReference type="Proteomes" id="UP000006558">
    <property type="component" value="Chromosome"/>
</dbReference>
<dbReference type="GO" id="GO:0005829">
    <property type="term" value="C:cytosol"/>
    <property type="evidence" value="ECO:0007669"/>
    <property type="project" value="TreeGrafter"/>
</dbReference>
<dbReference type="GO" id="GO:0009318">
    <property type="term" value="C:exodeoxyribonuclease VII complex"/>
    <property type="evidence" value="ECO:0007669"/>
    <property type="project" value="InterPro"/>
</dbReference>
<dbReference type="GO" id="GO:0008855">
    <property type="term" value="F:exodeoxyribonuclease VII activity"/>
    <property type="evidence" value="ECO:0007669"/>
    <property type="project" value="UniProtKB-UniRule"/>
</dbReference>
<dbReference type="GO" id="GO:0006308">
    <property type="term" value="P:DNA catabolic process"/>
    <property type="evidence" value="ECO:0007669"/>
    <property type="project" value="UniProtKB-UniRule"/>
</dbReference>
<dbReference type="Gene3D" id="1.10.287.1040">
    <property type="entry name" value="Exonuclease VII, small subunit"/>
    <property type="match status" value="1"/>
</dbReference>
<dbReference type="HAMAP" id="MF_00337">
    <property type="entry name" value="Exonuc_7_S"/>
    <property type="match status" value="1"/>
</dbReference>
<dbReference type="InterPro" id="IPR003761">
    <property type="entry name" value="Exonuc_VII_S"/>
</dbReference>
<dbReference type="InterPro" id="IPR037004">
    <property type="entry name" value="Exonuc_VII_ssu_sf"/>
</dbReference>
<dbReference type="NCBIfam" id="NF002140">
    <property type="entry name" value="PRK00977.1-4"/>
    <property type="match status" value="1"/>
</dbReference>
<dbReference type="NCBIfam" id="NF010673">
    <property type="entry name" value="PRK14070.1"/>
    <property type="match status" value="1"/>
</dbReference>
<dbReference type="NCBIfam" id="TIGR01280">
    <property type="entry name" value="xseB"/>
    <property type="match status" value="1"/>
</dbReference>
<dbReference type="PANTHER" id="PTHR34137">
    <property type="entry name" value="EXODEOXYRIBONUCLEASE 7 SMALL SUBUNIT"/>
    <property type="match status" value="1"/>
</dbReference>
<dbReference type="PANTHER" id="PTHR34137:SF1">
    <property type="entry name" value="EXODEOXYRIBONUCLEASE 7 SMALL SUBUNIT"/>
    <property type="match status" value="1"/>
</dbReference>
<dbReference type="Pfam" id="PF02609">
    <property type="entry name" value="Exonuc_VII_S"/>
    <property type="match status" value="1"/>
</dbReference>
<dbReference type="PIRSF" id="PIRSF006488">
    <property type="entry name" value="Exonuc_VII_S"/>
    <property type="match status" value="1"/>
</dbReference>
<dbReference type="SUPFAM" id="SSF116842">
    <property type="entry name" value="XseB-like"/>
    <property type="match status" value="1"/>
</dbReference>
<proteinExistence type="inferred from homology"/>
<comment type="function">
    <text evidence="1">Bidirectionally degrades single-stranded DNA into large acid-insoluble oligonucleotides, which are then degraded further into small acid-soluble oligonucleotides.</text>
</comment>
<comment type="catalytic activity">
    <reaction evidence="1">
        <text>Exonucleolytic cleavage in either 5'- to 3'- or 3'- to 5'-direction to yield nucleoside 5'-phosphates.</text>
        <dbReference type="EC" id="3.1.11.6"/>
    </reaction>
</comment>
<comment type="subunit">
    <text evidence="1">Heterooligomer composed of large and small subunits.</text>
</comment>
<comment type="subcellular location">
    <subcellularLocation>
        <location evidence="1">Cytoplasm</location>
    </subcellularLocation>
</comment>
<comment type="similarity">
    <text evidence="1">Belongs to the XseB family.</text>
</comment>
<sequence length="75" mass="9041">MNFEEMMKELEEIVNRLENEDLPLEESIKLFERGVELYRKCKEILQQNRLKIIDVMKELEGEIDASGRDQENELR</sequence>
<protein>
    <recommendedName>
        <fullName evidence="1">Exodeoxyribonuclease 7 small subunit</fullName>
        <ecNumber evidence="1">3.1.11.6</ecNumber>
    </recommendedName>
    <alternativeName>
        <fullName evidence="1">Exodeoxyribonuclease VII small subunit</fullName>
        <shortName evidence="1">Exonuclease VII small subunit</shortName>
    </alternativeName>
</protein>
<evidence type="ECO:0000255" key="1">
    <source>
        <dbReference type="HAMAP-Rule" id="MF_00337"/>
    </source>
</evidence>